<accession>Q9I2U1</accession>
<comment type="function">
    <text evidence="1">Cleaves peptides in various proteins in a process that requires ATP hydrolysis. Has a chymotrypsin-like activity. Plays a major role in the degradation of misfolded proteins.</text>
</comment>
<comment type="catalytic activity">
    <reaction evidence="1">
        <text>Hydrolysis of proteins to small peptides in the presence of ATP and magnesium. alpha-casein is the usual test substrate. In the absence of ATP, only oligopeptides shorter than five residues are hydrolyzed (such as succinyl-Leu-Tyr-|-NHMec, and Leu-Tyr-Leu-|-Tyr-Trp, in which cleavage of the -Tyr-|-Leu- and -Tyr-|-Trp bonds also occurs).</text>
        <dbReference type="EC" id="3.4.21.92"/>
    </reaction>
</comment>
<comment type="subunit">
    <text evidence="1">Fourteen ClpP subunits assemble into 2 heptameric rings which stack back to back to give a disk-like structure with a central cavity, resembling the structure of eukaryotic proteasomes.</text>
</comment>
<comment type="subcellular location">
    <subcellularLocation>
        <location evidence="1">Cytoplasm</location>
    </subcellularLocation>
</comment>
<comment type="similarity">
    <text evidence="1">Belongs to the peptidase S14 family.</text>
</comment>
<sequence>MSRNSFIPHVPDIQAAGGLVPMVVEQSARGERAYDIYSRLLKERIIFLVGQVEDYMANLVVAQLLFLEAENPEKDIHLYINSPGGSVTAGMSIYDTMQFIKPNVSTTCIGQACSMGALLLAGGAAGKRYCLPHSRMMIHQPLGGFQGQASDIEIHAKEILFIKERLNQILAHHTGQPLDVIARDTDRDRFMSGDEAVKYGLIDKVMTQRDLAV</sequence>
<dbReference type="EC" id="3.4.21.92" evidence="1"/>
<dbReference type="EMBL" id="AE004091">
    <property type="protein sequence ID" value="AAG05190.1"/>
    <property type="molecule type" value="Genomic_DNA"/>
</dbReference>
<dbReference type="PIR" id="E83420">
    <property type="entry name" value="E83420"/>
</dbReference>
<dbReference type="PDB" id="7M1M">
    <property type="method" value="X-ray"/>
    <property type="resolution" value="2.60 A"/>
    <property type="chains" value="A/B/C/D/E/F/G/H/I/J/K/L/M/N=16-213"/>
</dbReference>
<dbReference type="PDBsum" id="7M1M"/>
<dbReference type="SMR" id="Q9I2U1"/>
<dbReference type="FunCoup" id="Q9I2U1">
    <property type="interactions" value="622"/>
</dbReference>
<dbReference type="STRING" id="208964.PA1801"/>
<dbReference type="MEROPS" id="S14.001"/>
<dbReference type="PaxDb" id="208964-PA1801"/>
<dbReference type="DNASU" id="878359"/>
<dbReference type="KEGG" id="pae:PA1801"/>
<dbReference type="PATRIC" id="fig|208964.12.peg.1871"/>
<dbReference type="PseudoCAP" id="PA1801"/>
<dbReference type="HOGENOM" id="CLU_058707_3_2_6"/>
<dbReference type="InParanoid" id="Q9I2U1"/>
<dbReference type="OrthoDB" id="9802800at2"/>
<dbReference type="PhylomeDB" id="Q9I2U1"/>
<dbReference type="BioCyc" id="PAER208964:G1FZ6-1838-MONOMER"/>
<dbReference type="PHI-base" id="PHI:6213"/>
<dbReference type="Proteomes" id="UP000002438">
    <property type="component" value="Chromosome"/>
</dbReference>
<dbReference type="GO" id="GO:0005737">
    <property type="term" value="C:cytoplasm"/>
    <property type="evidence" value="ECO:0007669"/>
    <property type="project" value="UniProtKB-SubCell"/>
</dbReference>
<dbReference type="GO" id="GO:0009368">
    <property type="term" value="C:endopeptidase Clp complex"/>
    <property type="evidence" value="ECO:0000318"/>
    <property type="project" value="GO_Central"/>
</dbReference>
<dbReference type="GO" id="GO:0004176">
    <property type="term" value="F:ATP-dependent peptidase activity"/>
    <property type="evidence" value="ECO:0000318"/>
    <property type="project" value="GO_Central"/>
</dbReference>
<dbReference type="GO" id="GO:0051117">
    <property type="term" value="F:ATPase binding"/>
    <property type="evidence" value="ECO:0000318"/>
    <property type="project" value="GO_Central"/>
</dbReference>
<dbReference type="GO" id="GO:0004252">
    <property type="term" value="F:serine-type endopeptidase activity"/>
    <property type="evidence" value="ECO:0000318"/>
    <property type="project" value="GO_Central"/>
</dbReference>
<dbReference type="GO" id="GO:0071978">
    <property type="term" value="P:bacterial-type flagellum-dependent swarming motility"/>
    <property type="evidence" value="ECO:0000315"/>
    <property type="project" value="PseudoCAP"/>
</dbReference>
<dbReference type="GO" id="GO:0071236">
    <property type="term" value="P:cellular response to antibiotic"/>
    <property type="evidence" value="ECO:0000315"/>
    <property type="project" value="PseudoCAP"/>
</dbReference>
<dbReference type="GO" id="GO:0006515">
    <property type="term" value="P:protein quality control for misfolded or incompletely synthesized proteins"/>
    <property type="evidence" value="ECO:0000318"/>
    <property type="project" value="GO_Central"/>
</dbReference>
<dbReference type="GO" id="GO:0044010">
    <property type="term" value="P:single-species biofilm formation"/>
    <property type="evidence" value="ECO:0000315"/>
    <property type="project" value="PseudoCAP"/>
</dbReference>
<dbReference type="GO" id="GO:0044011">
    <property type="term" value="P:single-species biofilm formation on inanimate substrate"/>
    <property type="evidence" value="ECO:0000315"/>
    <property type="project" value="PseudoCAP"/>
</dbReference>
<dbReference type="CDD" id="cd07017">
    <property type="entry name" value="S14_ClpP_2"/>
    <property type="match status" value="1"/>
</dbReference>
<dbReference type="FunFam" id="3.90.226.10:FF:000001">
    <property type="entry name" value="ATP-dependent Clp protease proteolytic subunit"/>
    <property type="match status" value="1"/>
</dbReference>
<dbReference type="Gene3D" id="3.90.226.10">
    <property type="entry name" value="2-enoyl-CoA Hydratase, Chain A, domain 1"/>
    <property type="match status" value="1"/>
</dbReference>
<dbReference type="HAMAP" id="MF_00444">
    <property type="entry name" value="ClpP"/>
    <property type="match status" value="1"/>
</dbReference>
<dbReference type="InterPro" id="IPR001907">
    <property type="entry name" value="ClpP"/>
</dbReference>
<dbReference type="InterPro" id="IPR029045">
    <property type="entry name" value="ClpP/crotonase-like_dom_sf"/>
</dbReference>
<dbReference type="InterPro" id="IPR023562">
    <property type="entry name" value="ClpP/TepA"/>
</dbReference>
<dbReference type="InterPro" id="IPR033135">
    <property type="entry name" value="ClpP_His_AS"/>
</dbReference>
<dbReference type="InterPro" id="IPR018215">
    <property type="entry name" value="ClpP_Ser_AS"/>
</dbReference>
<dbReference type="NCBIfam" id="TIGR00493">
    <property type="entry name" value="clpP"/>
    <property type="match status" value="1"/>
</dbReference>
<dbReference type="NCBIfam" id="NF001368">
    <property type="entry name" value="PRK00277.1"/>
    <property type="match status" value="1"/>
</dbReference>
<dbReference type="NCBIfam" id="NF009205">
    <property type="entry name" value="PRK12553.1"/>
    <property type="match status" value="1"/>
</dbReference>
<dbReference type="PANTHER" id="PTHR10381">
    <property type="entry name" value="ATP-DEPENDENT CLP PROTEASE PROTEOLYTIC SUBUNIT"/>
    <property type="match status" value="1"/>
</dbReference>
<dbReference type="PANTHER" id="PTHR10381:SF70">
    <property type="entry name" value="ATP-DEPENDENT CLP PROTEASE PROTEOLYTIC SUBUNIT"/>
    <property type="match status" value="1"/>
</dbReference>
<dbReference type="Pfam" id="PF00574">
    <property type="entry name" value="CLP_protease"/>
    <property type="match status" value="1"/>
</dbReference>
<dbReference type="PRINTS" id="PR00127">
    <property type="entry name" value="CLPPROTEASEP"/>
</dbReference>
<dbReference type="SUPFAM" id="SSF52096">
    <property type="entry name" value="ClpP/crotonase"/>
    <property type="match status" value="1"/>
</dbReference>
<dbReference type="PROSITE" id="PS00382">
    <property type="entry name" value="CLP_PROTEASE_HIS"/>
    <property type="match status" value="1"/>
</dbReference>
<dbReference type="PROSITE" id="PS00381">
    <property type="entry name" value="CLP_PROTEASE_SER"/>
    <property type="match status" value="1"/>
</dbReference>
<evidence type="ECO:0000255" key="1">
    <source>
        <dbReference type="HAMAP-Rule" id="MF_00444"/>
    </source>
</evidence>
<evidence type="ECO:0007829" key="2">
    <source>
        <dbReference type="PDB" id="7M1M"/>
    </source>
</evidence>
<keyword id="KW-0002">3D-structure</keyword>
<keyword id="KW-0963">Cytoplasm</keyword>
<keyword id="KW-0378">Hydrolase</keyword>
<keyword id="KW-0645">Protease</keyword>
<keyword id="KW-1185">Reference proteome</keyword>
<keyword id="KW-0720">Serine protease</keyword>
<protein>
    <recommendedName>
        <fullName evidence="1">ATP-dependent Clp protease proteolytic subunit 1</fullName>
        <ecNumber evidence="1">3.4.21.92</ecNumber>
    </recommendedName>
    <alternativeName>
        <fullName evidence="1">Endopeptidase Clp 1</fullName>
    </alternativeName>
</protein>
<feature type="chain" id="PRO_0000179626" description="ATP-dependent Clp protease proteolytic subunit 1">
    <location>
        <begin position="1"/>
        <end position="213"/>
    </location>
</feature>
<feature type="active site" description="Nucleophile" evidence="1">
    <location>
        <position position="114"/>
    </location>
</feature>
<feature type="active site" evidence="1">
    <location>
        <position position="139"/>
    </location>
</feature>
<feature type="helix" evidence="2">
    <location>
        <begin position="36"/>
        <end position="42"/>
    </location>
</feature>
<feature type="strand" evidence="2">
    <location>
        <begin position="45"/>
        <end position="52"/>
    </location>
</feature>
<feature type="helix" evidence="2">
    <location>
        <begin position="54"/>
        <end position="70"/>
    </location>
</feature>
<feature type="strand" evidence="2">
    <location>
        <begin position="72"/>
        <end position="74"/>
    </location>
</feature>
<feature type="strand" evidence="2">
    <location>
        <begin position="76"/>
        <end position="82"/>
    </location>
</feature>
<feature type="helix" evidence="2">
    <location>
        <begin position="87"/>
        <end position="99"/>
    </location>
</feature>
<feature type="strand" evidence="2">
    <location>
        <begin position="100"/>
        <end position="102"/>
    </location>
</feature>
<feature type="strand" evidence="2">
    <location>
        <begin position="104"/>
        <end position="113"/>
    </location>
</feature>
<feature type="helix" evidence="2">
    <location>
        <begin position="115"/>
        <end position="121"/>
    </location>
</feature>
<feature type="strand" evidence="2">
    <location>
        <begin position="128"/>
        <end position="130"/>
    </location>
</feature>
<feature type="strand" evidence="2">
    <location>
        <begin position="135"/>
        <end position="138"/>
    </location>
</feature>
<feature type="strand" evidence="2">
    <location>
        <begin position="142"/>
        <end position="148"/>
    </location>
</feature>
<feature type="helix" evidence="2">
    <location>
        <begin position="149"/>
        <end position="174"/>
    </location>
</feature>
<feature type="helix" evidence="2">
    <location>
        <begin position="178"/>
        <end position="184"/>
    </location>
</feature>
<feature type="strand" evidence="2">
    <location>
        <begin position="189"/>
        <end position="191"/>
    </location>
</feature>
<feature type="helix" evidence="2">
    <location>
        <begin position="193"/>
        <end position="198"/>
    </location>
</feature>
<feature type="strand" evidence="2">
    <location>
        <begin position="203"/>
        <end position="205"/>
    </location>
</feature>
<organism>
    <name type="scientific">Pseudomonas aeruginosa (strain ATCC 15692 / DSM 22644 / CIP 104116 / JCM 14847 / LMG 12228 / 1C / PRS 101 / PAO1)</name>
    <dbReference type="NCBI Taxonomy" id="208964"/>
    <lineage>
        <taxon>Bacteria</taxon>
        <taxon>Pseudomonadati</taxon>
        <taxon>Pseudomonadota</taxon>
        <taxon>Gammaproteobacteria</taxon>
        <taxon>Pseudomonadales</taxon>
        <taxon>Pseudomonadaceae</taxon>
        <taxon>Pseudomonas</taxon>
    </lineage>
</organism>
<name>CLPP1_PSEAE</name>
<gene>
    <name evidence="1" type="primary">clpP1</name>
    <name type="ordered locus">PA1801</name>
</gene>
<reference key="1">
    <citation type="journal article" date="2000" name="Nature">
        <title>Complete genome sequence of Pseudomonas aeruginosa PAO1, an opportunistic pathogen.</title>
        <authorList>
            <person name="Stover C.K."/>
            <person name="Pham X.-Q.T."/>
            <person name="Erwin A.L."/>
            <person name="Mizoguchi S.D."/>
            <person name="Warrener P."/>
            <person name="Hickey M.J."/>
            <person name="Brinkman F.S.L."/>
            <person name="Hufnagle W.O."/>
            <person name="Kowalik D.J."/>
            <person name="Lagrou M."/>
            <person name="Garber R.L."/>
            <person name="Goltry L."/>
            <person name="Tolentino E."/>
            <person name="Westbrock-Wadman S."/>
            <person name="Yuan Y."/>
            <person name="Brody L.L."/>
            <person name="Coulter S.N."/>
            <person name="Folger K.R."/>
            <person name="Kas A."/>
            <person name="Larbig K."/>
            <person name="Lim R.M."/>
            <person name="Smith K.A."/>
            <person name="Spencer D.H."/>
            <person name="Wong G.K.-S."/>
            <person name="Wu Z."/>
            <person name="Paulsen I.T."/>
            <person name="Reizer J."/>
            <person name="Saier M.H. Jr."/>
            <person name="Hancock R.E.W."/>
            <person name="Lory S."/>
            <person name="Olson M.V."/>
        </authorList>
    </citation>
    <scope>NUCLEOTIDE SEQUENCE [LARGE SCALE GENOMIC DNA]</scope>
    <source>
        <strain>ATCC 15692 / DSM 22644 / CIP 104116 / JCM 14847 / LMG 12228 / 1C / PRS 101 / PAO1</strain>
    </source>
</reference>
<proteinExistence type="evidence at protein level"/>